<proteinExistence type="inferred from homology"/>
<comment type="function">
    <text evidence="1">Subunit of malonate decarboxylase, it is an acyl carrier protein to which acetyl and malonyl thioester residues are bound via a 2'-(5''-phosphoribosyl)-3'-dephospho-CoA prosthetic group and turn over during the catalytic mechanism.</text>
</comment>
<comment type="subcellular location">
    <subcellularLocation>
        <location evidence="1">Cytoplasm</location>
    </subcellularLocation>
</comment>
<comment type="PTM">
    <text evidence="1">Covalently binds the prosthetic group of malonate decarboxylase.</text>
</comment>
<comment type="similarity">
    <text evidence="1">Belongs to the MdcC family.</text>
</comment>
<protein>
    <recommendedName>
        <fullName evidence="1">Malonate decarboxylase acyl carrier protein</fullName>
    </recommendedName>
    <alternativeName>
        <fullName evidence="1">Malonate decarboxylase subunit delta</fullName>
    </alternativeName>
</protein>
<sequence length="99" mass="10639">METLSFEFPAGQPPKGRALVGVVGSGDLEVLLEPGSPGKLSIQVVTSVNGASLRWKHLFERMFDGQTPPALSIDIHDFGATPGVVRLRLEQGFEEIGHD</sequence>
<dbReference type="EMBL" id="CP000058">
    <property type="protein sequence ID" value="AAZ37523.1"/>
    <property type="molecule type" value="Genomic_DNA"/>
</dbReference>
<dbReference type="RefSeq" id="WP_004654333.1">
    <property type="nucleotide sequence ID" value="NC_005773.3"/>
</dbReference>
<dbReference type="SMR" id="Q48PD1"/>
<dbReference type="KEGG" id="psp:PSPPH_0435"/>
<dbReference type="eggNOG" id="COG3052">
    <property type="taxonomic scope" value="Bacteria"/>
</dbReference>
<dbReference type="HOGENOM" id="CLU_173135_1_0_6"/>
<dbReference type="Proteomes" id="UP000000551">
    <property type="component" value="Chromosome"/>
</dbReference>
<dbReference type="GO" id="GO:0005737">
    <property type="term" value="C:cytoplasm"/>
    <property type="evidence" value="ECO:0007669"/>
    <property type="project" value="UniProtKB-SubCell"/>
</dbReference>
<dbReference type="GO" id="GO:0000036">
    <property type="term" value="F:acyl carrier activity"/>
    <property type="evidence" value="ECO:0007669"/>
    <property type="project" value="UniProtKB-UniRule"/>
</dbReference>
<dbReference type="HAMAP" id="MF_00710">
    <property type="entry name" value="Malonate_deCO2ase_dsu"/>
    <property type="match status" value="1"/>
</dbReference>
<dbReference type="InterPro" id="IPR023439">
    <property type="entry name" value="Mal_deCO2ase/Cit_lyase_ACP"/>
</dbReference>
<dbReference type="InterPro" id="IPR009662">
    <property type="entry name" value="Malonate_deCO2ase_dsu"/>
</dbReference>
<dbReference type="NCBIfam" id="TIGR03130">
    <property type="entry name" value="malonate_delta"/>
    <property type="match status" value="1"/>
</dbReference>
<dbReference type="NCBIfam" id="NF002293">
    <property type="entry name" value="PRK01220.1"/>
    <property type="match status" value="1"/>
</dbReference>
<dbReference type="Pfam" id="PF06857">
    <property type="entry name" value="ACP"/>
    <property type="match status" value="1"/>
</dbReference>
<evidence type="ECO:0000255" key="1">
    <source>
        <dbReference type="HAMAP-Rule" id="MF_00710"/>
    </source>
</evidence>
<feature type="chain" id="PRO_0000303113" description="Malonate decarboxylase acyl carrier protein">
    <location>
        <begin position="1"/>
        <end position="99"/>
    </location>
</feature>
<feature type="modified residue" description="O-(phosphoribosyl dephospho-coenzyme A)serine" evidence="1">
    <location>
        <position position="25"/>
    </location>
</feature>
<name>MDCC_PSE14</name>
<gene>
    <name evidence="1" type="primary">mdcC</name>
    <name type="ordered locus">PSPPH_0435</name>
</gene>
<reference key="1">
    <citation type="journal article" date="2005" name="J. Bacteriol.">
        <title>Whole-genome sequence analysis of Pseudomonas syringae pv. phaseolicola 1448A reveals divergence among pathovars in genes involved in virulence and transposition.</title>
        <authorList>
            <person name="Joardar V."/>
            <person name="Lindeberg M."/>
            <person name="Jackson R.W."/>
            <person name="Selengut J."/>
            <person name="Dodson R."/>
            <person name="Brinkac L.M."/>
            <person name="Daugherty S.C."/>
            <person name="DeBoy R.T."/>
            <person name="Durkin A.S."/>
            <person name="Gwinn Giglio M."/>
            <person name="Madupu R."/>
            <person name="Nelson W.C."/>
            <person name="Rosovitz M.J."/>
            <person name="Sullivan S.A."/>
            <person name="Crabtree J."/>
            <person name="Creasy T."/>
            <person name="Davidsen T.M."/>
            <person name="Haft D.H."/>
            <person name="Zafar N."/>
            <person name="Zhou L."/>
            <person name="Halpin R."/>
            <person name="Holley T."/>
            <person name="Khouri H.M."/>
            <person name="Feldblyum T.V."/>
            <person name="White O."/>
            <person name="Fraser C.M."/>
            <person name="Chatterjee A.K."/>
            <person name="Cartinhour S."/>
            <person name="Schneider D."/>
            <person name="Mansfield J.W."/>
            <person name="Collmer A."/>
            <person name="Buell R."/>
        </authorList>
    </citation>
    <scope>NUCLEOTIDE SEQUENCE [LARGE SCALE GENOMIC DNA]</scope>
    <source>
        <strain>1448A / Race 6</strain>
    </source>
</reference>
<accession>Q48PD1</accession>
<organism>
    <name type="scientific">Pseudomonas savastanoi pv. phaseolicola (strain 1448A / Race 6)</name>
    <name type="common">Pseudomonas syringae pv. phaseolicola (strain 1448A / Race 6)</name>
    <dbReference type="NCBI Taxonomy" id="264730"/>
    <lineage>
        <taxon>Bacteria</taxon>
        <taxon>Pseudomonadati</taxon>
        <taxon>Pseudomonadota</taxon>
        <taxon>Gammaproteobacteria</taxon>
        <taxon>Pseudomonadales</taxon>
        <taxon>Pseudomonadaceae</taxon>
        <taxon>Pseudomonas</taxon>
    </lineage>
</organism>
<keyword id="KW-0963">Cytoplasm</keyword>
<keyword id="KW-0597">Phosphoprotein</keyword>